<feature type="chain" id="PRO_0000083460" description="GATA-binding factor A">
    <location>
        <begin position="1"/>
        <end position="540"/>
    </location>
</feature>
<feature type="zinc finger region" description="GATA-type 1" evidence="1">
    <location>
        <begin position="169"/>
        <end position="193"/>
    </location>
</feature>
<feature type="zinc finger region" description="GATA-type 2" evidence="1">
    <location>
        <begin position="226"/>
        <end position="250"/>
    </location>
</feature>
<feature type="region of interest" description="Disordered" evidence="2">
    <location>
        <begin position="1"/>
        <end position="23"/>
    </location>
</feature>
<feature type="region of interest" description="Disordered" evidence="2">
    <location>
        <begin position="265"/>
        <end position="296"/>
    </location>
</feature>
<feature type="region of interest" description="Disordered" evidence="2">
    <location>
        <begin position="325"/>
        <end position="360"/>
    </location>
</feature>
<feature type="region of interest" description="Disordered" evidence="2">
    <location>
        <begin position="376"/>
        <end position="456"/>
    </location>
</feature>
<feature type="compositionally biased region" description="Low complexity" evidence="2">
    <location>
        <begin position="1"/>
        <end position="18"/>
    </location>
</feature>
<feature type="compositionally biased region" description="Gly residues" evidence="2">
    <location>
        <begin position="284"/>
        <end position="294"/>
    </location>
</feature>
<feature type="compositionally biased region" description="Polar residues" evidence="2">
    <location>
        <begin position="329"/>
        <end position="338"/>
    </location>
</feature>
<feature type="compositionally biased region" description="Low complexity" evidence="2">
    <location>
        <begin position="345"/>
        <end position="360"/>
    </location>
</feature>
<feature type="compositionally biased region" description="Low complexity" evidence="2">
    <location>
        <begin position="376"/>
        <end position="396"/>
    </location>
</feature>
<feature type="compositionally biased region" description="Basic residues" evidence="2">
    <location>
        <begin position="446"/>
        <end position="456"/>
    </location>
</feature>
<feature type="mutagenesis site" description="In pnrD4; abolishes DNA-binding.">
    <original>E</original>
    <variation>K</variation>
    <location>
        <position position="168"/>
    </location>
</feature>
<feature type="mutagenesis site" description="In pnrD1; abolishes DNA-binding.">
    <original>C</original>
    <variation>Y</variation>
    <location>
        <position position="169"/>
    </location>
</feature>
<feature type="mutagenesis site" description="In pnrD2; abolishes DNA-binding.">
    <original>G</original>
    <variation>E</variation>
    <location>
        <position position="186"/>
    </location>
</feature>
<feature type="mutagenesis site" description="In pnrD3; abolishes DNA-binding.">
    <original>C</original>
    <variation>S</variation>
    <location>
        <position position="190"/>
    </location>
</feature>
<feature type="sequence conflict" description="In Ref. 2; AAB29876." evidence="4" ref="2">
    <original>Y</original>
    <variation>S</variation>
    <location>
        <position position="413"/>
    </location>
</feature>
<protein>
    <recommendedName>
        <fullName>GATA-binding factor A</fullName>
    </recommendedName>
    <alternativeName>
        <fullName>Protein pannier</fullName>
    </alternativeName>
    <alternativeName>
        <fullName>Transcription factor GATA-A</fullName>
    </alternativeName>
    <alternativeName>
        <fullName>dGATA-A</fullName>
    </alternativeName>
</protein>
<sequence length="540" mass="57036">MGILLSDGDSTSDQQSTRDYPHFSGDYQNVTLSAASASTSASASATHVAAVKMYHSSAVAAYTDLAAAGSAASAGVGVGVSGYHQQAVNAPVYVPSNRQYNHVAAHFGSAAAQNAWTTEGFGSAHAQFYSPNAAVMMGSWRSAYDPSGFQRSSPYESAMDFQFGEGRECVNCGAISTPLWRRDGTGHYLCNACGLYHKMNGMNRPLIKPSKRLVSATATRRMGLCCTNCGTRTTTLWRRNNDGEPVCNACGLYYKLHGVNRPLAMRKDGIQTRKRKPKKTGSGSAVGAGTGSGTGSTLEAIKECKEEHDLKPSLSLERHSLSKLHTDMKSGTSSSSTLMGHHSAQQQQQQQQQQQQQQQQQQQQSAHQQCFPLYGQTTTQQQHQQHGHSMTSSSGQAHLSARHLHGAAGTQLYTPGSSSGGGSASAYTSHSAETPALSNGTPSPHYQHHHHLGGTHGHHVTAAAAHHHFHAAAAVAAYGVKTEASATNYDYVNNCYFGGTFGALGGAATTTAMAGGAASELAGYHHQHNVIQAAKLMATS</sequence>
<keyword id="KW-0010">Activator</keyword>
<keyword id="KW-0238">DNA-binding</keyword>
<keyword id="KW-0479">Metal-binding</keyword>
<keyword id="KW-0539">Nucleus</keyword>
<keyword id="KW-1185">Reference proteome</keyword>
<keyword id="KW-0677">Repeat</keyword>
<keyword id="KW-0804">Transcription</keyword>
<keyword id="KW-0805">Transcription regulation</keyword>
<keyword id="KW-0862">Zinc</keyword>
<keyword id="KW-0863">Zinc-finger</keyword>
<organism>
    <name type="scientific">Drosophila melanogaster</name>
    <name type="common">Fruit fly</name>
    <dbReference type="NCBI Taxonomy" id="7227"/>
    <lineage>
        <taxon>Eukaryota</taxon>
        <taxon>Metazoa</taxon>
        <taxon>Ecdysozoa</taxon>
        <taxon>Arthropoda</taxon>
        <taxon>Hexapoda</taxon>
        <taxon>Insecta</taxon>
        <taxon>Pterygota</taxon>
        <taxon>Neoptera</taxon>
        <taxon>Endopterygota</taxon>
        <taxon>Diptera</taxon>
        <taxon>Brachycera</taxon>
        <taxon>Muscomorpha</taxon>
        <taxon>Ephydroidea</taxon>
        <taxon>Drosophilidae</taxon>
        <taxon>Drosophila</taxon>
        <taxon>Sophophora</taxon>
    </lineage>
</organism>
<comment type="function">
    <text>Transcriptional regulator involved in several developmental processes during embryonic and imaginal disks development. Involved in determining dorsal cell fate. Acts as an essential transcriptional regulator of proneural achaete-scute complex (AS-C) and is required for its spatial regulation during development of the adult peripheral nervous system, and hence for the positioning of neural precursors. It is the only factor to directly activate AS-C genes.</text>
</comment>
<comment type="subunit">
    <text evidence="3">Interacts with OSA.</text>
</comment>
<comment type="subcellular location">
    <subcellularLocation>
        <location>Nucleus</location>
    </subcellularLocation>
</comment>
<comment type="developmental stage">
    <text>It is first seen in the dorsal portion of the embryo just after cellularization and is expressed at high levels during early embryogenesis and as development progresses high levels are seen in the dorsal epidermis.</text>
</comment>
<proteinExistence type="evidence at protein level"/>
<dbReference type="EMBL" id="S68798">
    <property type="protein sequence ID" value="AAB29874.1"/>
    <property type="molecule type" value="Genomic_DNA"/>
</dbReference>
<dbReference type="EMBL" id="S68909">
    <property type="protein sequence ID" value="AAB29874.1"/>
    <property type="status" value="JOINED"/>
    <property type="molecule type" value="Genomic_DNA"/>
</dbReference>
<dbReference type="EMBL" id="S68793">
    <property type="protein sequence ID" value="AAB29874.1"/>
    <property type="status" value="JOINED"/>
    <property type="molecule type" value="Genomic_DNA"/>
</dbReference>
<dbReference type="EMBL" id="S68795">
    <property type="protein sequence ID" value="AAB29874.1"/>
    <property type="status" value="JOINED"/>
    <property type="molecule type" value="Genomic_DNA"/>
</dbReference>
<dbReference type="EMBL" id="S68803">
    <property type="protein sequence ID" value="AAB29876.2"/>
    <property type="molecule type" value="Genomic_DNA"/>
</dbReference>
<dbReference type="EMBL" id="S68802">
    <property type="protein sequence ID" value="AAB29876.2"/>
    <property type="status" value="JOINED"/>
    <property type="molecule type" value="Genomic_DNA"/>
</dbReference>
<dbReference type="EMBL" id="AE014297">
    <property type="protein sequence ID" value="AAN13693.1"/>
    <property type="molecule type" value="Genomic_DNA"/>
</dbReference>
<dbReference type="RefSeq" id="NP_476685.1">
    <property type="nucleotide sequence ID" value="NM_057337.3"/>
</dbReference>
<dbReference type="SMR" id="P52168"/>
<dbReference type="BioGRID" id="69326">
    <property type="interactions" value="112"/>
</dbReference>
<dbReference type="FunCoup" id="P52168">
    <property type="interactions" value="77"/>
</dbReference>
<dbReference type="IntAct" id="P52168">
    <property type="interactions" value="2"/>
</dbReference>
<dbReference type="STRING" id="7227.FBpp0082675"/>
<dbReference type="PaxDb" id="7227-FBpp0082675"/>
<dbReference type="DNASU" id="44849"/>
<dbReference type="EnsemblMetazoa" id="FBtr0083221">
    <property type="protein sequence ID" value="FBpp0082675"/>
    <property type="gene ID" value="FBgn0003117"/>
</dbReference>
<dbReference type="GeneID" id="44849"/>
<dbReference type="KEGG" id="dme:Dmel_CG3978"/>
<dbReference type="UCSC" id="CG3978-RA">
    <property type="organism name" value="d. melanogaster"/>
</dbReference>
<dbReference type="AGR" id="FB:FBgn0003117"/>
<dbReference type="CTD" id="44849"/>
<dbReference type="FlyBase" id="FBgn0003117">
    <property type="gene designation" value="pnr"/>
</dbReference>
<dbReference type="VEuPathDB" id="VectorBase:FBgn0003117"/>
<dbReference type="eggNOG" id="KOG1601">
    <property type="taxonomic scope" value="Eukaryota"/>
</dbReference>
<dbReference type="GeneTree" id="ENSGT00940000160139"/>
<dbReference type="InParanoid" id="P52168"/>
<dbReference type="OMA" id="TLMGHHN"/>
<dbReference type="OrthoDB" id="2162994at2759"/>
<dbReference type="PhylomeDB" id="P52168"/>
<dbReference type="Reactome" id="R-DME-5683826">
    <property type="pathway name" value="Surfactant metabolism"/>
</dbReference>
<dbReference type="Reactome" id="R-DME-8936459">
    <property type="pathway name" value="RUNX1 regulates genes involved in megakaryocyte differentiation and platelet function"/>
</dbReference>
<dbReference type="Reactome" id="R-DME-8939236">
    <property type="pathway name" value="RUNX1 regulates transcription of genes involved in differentiation of HSCs"/>
</dbReference>
<dbReference type="Reactome" id="R-DME-983231">
    <property type="pathway name" value="Factors involved in megakaryocyte development and platelet production"/>
</dbReference>
<dbReference type="SignaLink" id="P52168"/>
<dbReference type="BioGRID-ORCS" id="44849">
    <property type="hits" value="1 hit in 3 CRISPR screens"/>
</dbReference>
<dbReference type="GenomeRNAi" id="44849"/>
<dbReference type="PRO" id="PR:P52168"/>
<dbReference type="Proteomes" id="UP000000803">
    <property type="component" value="Chromosome 3R"/>
</dbReference>
<dbReference type="Bgee" id="FBgn0003117">
    <property type="expression patterns" value="Expressed in hemocyte (sensu Nematoda and Protostomia) in testis and 38 other cell types or tissues"/>
</dbReference>
<dbReference type="ExpressionAtlas" id="P52168">
    <property type="expression patterns" value="baseline and differential"/>
</dbReference>
<dbReference type="GO" id="GO:0005634">
    <property type="term" value="C:nucleus"/>
    <property type="evidence" value="ECO:0000314"/>
    <property type="project" value="FlyBase"/>
</dbReference>
<dbReference type="GO" id="GO:0000981">
    <property type="term" value="F:DNA-binding transcription factor activity, RNA polymerase II-specific"/>
    <property type="evidence" value="ECO:0000314"/>
    <property type="project" value="FlyBase"/>
</dbReference>
<dbReference type="GO" id="GO:0046982">
    <property type="term" value="F:protein heterodimerization activity"/>
    <property type="evidence" value="ECO:0000353"/>
    <property type="project" value="FlyBase"/>
</dbReference>
<dbReference type="GO" id="GO:0000978">
    <property type="term" value="F:RNA polymerase II cis-regulatory region sequence-specific DNA binding"/>
    <property type="evidence" value="ECO:0000318"/>
    <property type="project" value="GO_Central"/>
</dbReference>
<dbReference type="GO" id="GO:0061629">
    <property type="term" value="F:RNA polymerase II-specific DNA-binding transcription factor binding"/>
    <property type="evidence" value="ECO:0000353"/>
    <property type="project" value="FlyBase"/>
</dbReference>
<dbReference type="GO" id="GO:0008270">
    <property type="term" value="F:zinc ion binding"/>
    <property type="evidence" value="ECO:0007669"/>
    <property type="project" value="UniProtKB-KW"/>
</dbReference>
<dbReference type="GO" id="GO:0007350">
    <property type="term" value="P:blastoderm segmentation"/>
    <property type="evidence" value="ECO:0000315"/>
    <property type="project" value="FlyBase"/>
</dbReference>
<dbReference type="GO" id="GO:0007510">
    <property type="term" value="P:cardioblast cell fate determination"/>
    <property type="evidence" value="ECO:0000315"/>
    <property type="project" value="FlyBase"/>
</dbReference>
<dbReference type="GO" id="GO:0010002">
    <property type="term" value="P:cardioblast differentiation"/>
    <property type="evidence" value="ECO:0000315"/>
    <property type="project" value="FlyBase"/>
</dbReference>
<dbReference type="GO" id="GO:0035051">
    <property type="term" value="P:cardiocyte differentiation"/>
    <property type="evidence" value="ECO:0000315"/>
    <property type="project" value="FlyBase"/>
</dbReference>
<dbReference type="GO" id="GO:0045165">
    <property type="term" value="P:cell fate commitment"/>
    <property type="evidence" value="ECO:0000318"/>
    <property type="project" value="GO_Central"/>
</dbReference>
<dbReference type="GO" id="GO:0022416">
    <property type="term" value="P:chaeta development"/>
    <property type="evidence" value="ECO:0000316"/>
    <property type="project" value="FlyBase"/>
</dbReference>
<dbReference type="GO" id="GO:0035050">
    <property type="term" value="P:embryonic heart tube development"/>
    <property type="evidence" value="ECO:0000315"/>
    <property type="project" value="FlyBase"/>
</dbReference>
<dbReference type="GO" id="GO:0060047">
    <property type="term" value="P:heart contraction"/>
    <property type="evidence" value="ECO:0000315"/>
    <property type="project" value="FlyBase"/>
</dbReference>
<dbReference type="GO" id="GO:0046529">
    <property type="term" value="P:imaginal disc fusion, thorax closure"/>
    <property type="evidence" value="ECO:0000316"/>
    <property type="project" value="FlyBase"/>
</dbReference>
<dbReference type="GO" id="GO:0048542">
    <property type="term" value="P:lymph gland development"/>
    <property type="evidence" value="ECO:0000315"/>
    <property type="project" value="FlyBase"/>
</dbReference>
<dbReference type="GO" id="GO:0045892">
    <property type="term" value="P:negative regulation of DNA-templated transcription"/>
    <property type="evidence" value="ECO:0000304"/>
    <property type="project" value="FlyBase"/>
</dbReference>
<dbReference type="GO" id="GO:0000122">
    <property type="term" value="P:negative regulation of transcription by RNA polymerase II"/>
    <property type="evidence" value="ECO:0000315"/>
    <property type="project" value="FlyBase"/>
</dbReference>
<dbReference type="GO" id="GO:0061320">
    <property type="term" value="P:pericardial nephrocyte differentiation"/>
    <property type="evidence" value="ECO:0000315"/>
    <property type="project" value="FlyBase"/>
</dbReference>
<dbReference type="GO" id="GO:0042440">
    <property type="term" value="P:pigment metabolic process"/>
    <property type="evidence" value="ECO:0000315"/>
    <property type="project" value="FlyBase"/>
</dbReference>
<dbReference type="GO" id="GO:0006963">
    <property type="term" value="P:positive regulation of antibacterial peptide biosynthetic process"/>
    <property type="evidence" value="ECO:0000315"/>
    <property type="project" value="FlyBase"/>
</dbReference>
<dbReference type="GO" id="GO:0045944">
    <property type="term" value="P:positive regulation of transcription by RNA polymerase II"/>
    <property type="evidence" value="ECO:0000314"/>
    <property type="project" value="FlyBase"/>
</dbReference>
<dbReference type="CDD" id="cd00202">
    <property type="entry name" value="ZnF_GATA"/>
    <property type="match status" value="2"/>
</dbReference>
<dbReference type="FunFam" id="3.30.50.10:FF:000001">
    <property type="entry name" value="GATA transcription factor (GATAd)"/>
    <property type="match status" value="1"/>
</dbReference>
<dbReference type="FunFam" id="3.30.50.10:FF:000002">
    <property type="entry name" value="Gata transcription factor gatad"/>
    <property type="match status" value="1"/>
</dbReference>
<dbReference type="Gene3D" id="3.30.50.10">
    <property type="entry name" value="Erythroid Transcription Factor GATA-1, subunit A"/>
    <property type="match status" value="2"/>
</dbReference>
<dbReference type="InterPro" id="IPR039355">
    <property type="entry name" value="Transcription_factor_GATA"/>
</dbReference>
<dbReference type="InterPro" id="IPR000679">
    <property type="entry name" value="Znf_GATA"/>
</dbReference>
<dbReference type="InterPro" id="IPR013088">
    <property type="entry name" value="Znf_NHR/GATA"/>
</dbReference>
<dbReference type="PANTHER" id="PTHR10071:SF337">
    <property type="entry name" value="GATA-BINDING FACTOR A"/>
    <property type="match status" value="1"/>
</dbReference>
<dbReference type="PANTHER" id="PTHR10071">
    <property type="entry name" value="TRANSCRIPTION FACTOR GATA FAMILY MEMBER"/>
    <property type="match status" value="1"/>
</dbReference>
<dbReference type="Pfam" id="PF00320">
    <property type="entry name" value="GATA"/>
    <property type="match status" value="2"/>
</dbReference>
<dbReference type="PRINTS" id="PR00619">
    <property type="entry name" value="GATAZNFINGER"/>
</dbReference>
<dbReference type="SMART" id="SM00401">
    <property type="entry name" value="ZnF_GATA"/>
    <property type="match status" value="2"/>
</dbReference>
<dbReference type="SUPFAM" id="SSF57716">
    <property type="entry name" value="Glucocorticoid receptor-like (DNA-binding domain)"/>
    <property type="match status" value="2"/>
</dbReference>
<dbReference type="PROSITE" id="PS00344">
    <property type="entry name" value="GATA_ZN_FINGER_1"/>
    <property type="match status" value="2"/>
</dbReference>
<dbReference type="PROSITE" id="PS50114">
    <property type="entry name" value="GATA_ZN_FINGER_2"/>
    <property type="match status" value="2"/>
</dbReference>
<evidence type="ECO:0000255" key="1">
    <source>
        <dbReference type="PROSITE-ProRule" id="PRU00094"/>
    </source>
</evidence>
<evidence type="ECO:0000256" key="2">
    <source>
        <dbReference type="SAM" id="MobiDB-lite"/>
    </source>
</evidence>
<evidence type="ECO:0000269" key="3">
    <source>
    </source>
</evidence>
<evidence type="ECO:0000305" key="4"/>
<name>PNR_DROME</name>
<accession>P52168</accession>
<gene>
    <name type="primary">pnr</name>
    <name type="synonym">GATA-A</name>
    <name type="ORF">CG3978</name>
</gene>
<reference key="1">
    <citation type="journal article" date="1993" name="Development">
        <title>A GATA family transcription factor is expressed along the embryonic dorsoventral axis in Drosophila melanogaster.</title>
        <authorList>
            <person name="Winick J."/>
            <person name="Abel T."/>
            <person name="Leonard M.W."/>
            <person name="Michelson A.M."/>
            <person name="Chardon-Loriaux I."/>
            <person name="Holmgren R.A."/>
            <person name="Maniatis T."/>
            <person name="Engel J.D."/>
        </authorList>
    </citation>
    <scope>NUCLEOTIDE SEQUENCE [GENOMIC DNA]</scope>
</reference>
<reference key="2">
    <citation type="journal article" date="1993" name="Development">
        <title>Pannier, a negative regulator of achaete and scute in Drosophila, encodes a zinc finger protein with homology to the vertebrate transcription factor GATA-1.</title>
        <authorList>
            <person name="Ramain P."/>
            <person name="Heitzler P."/>
            <person name="Haenlin M."/>
            <person name="Simpson P."/>
        </authorList>
    </citation>
    <scope>NUCLEOTIDE SEQUENCE [GENOMIC DNA]</scope>
    <scope>MUTANTS PNRD1; PNRD2; PNRD3 AND PNRD4</scope>
</reference>
<reference key="3">
    <citation type="journal article" date="2000" name="Science">
        <title>The genome sequence of Drosophila melanogaster.</title>
        <authorList>
            <person name="Adams M.D."/>
            <person name="Celniker S.E."/>
            <person name="Holt R.A."/>
            <person name="Evans C.A."/>
            <person name="Gocayne J.D."/>
            <person name="Amanatides P.G."/>
            <person name="Scherer S.E."/>
            <person name="Li P.W."/>
            <person name="Hoskins R.A."/>
            <person name="Galle R.F."/>
            <person name="George R.A."/>
            <person name="Lewis S.E."/>
            <person name="Richards S."/>
            <person name="Ashburner M."/>
            <person name="Henderson S.N."/>
            <person name="Sutton G.G."/>
            <person name="Wortman J.R."/>
            <person name="Yandell M.D."/>
            <person name="Zhang Q."/>
            <person name="Chen L.X."/>
            <person name="Brandon R.C."/>
            <person name="Rogers Y.-H.C."/>
            <person name="Blazej R.G."/>
            <person name="Champe M."/>
            <person name="Pfeiffer B.D."/>
            <person name="Wan K.H."/>
            <person name="Doyle C."/>
            <person name="Baxter E.G."/>
            <person name="Helt G."/>
            <person name="Nelson C.R."/>
            <person name="Miklos G.L.G."/>
            <person name="Abril J.F."/>
            <person name="Agbayani A."/>
            <person name="An H.-J."/>
            <person name="Andrews-Pfannkoch C."/>
            <person name="Baldwin D."/>
            <person name="Ballew R.M."/>
            <person name="Basu A."/>
            <person name="Baxendale J."/>
            <person name="Bayraktaroglu L."/>
            <person name="Beasley E.M."/>
            <person name="Beeson K.Y."/>
            <person name="Benos P.V."/>
            <person name="Berman B.P."/>
            <person name="Bhandari D."/>
            <person name="Bolshakov S."/>
            <person name="Borkova D."/>
            <person name="Botchan M.R."/>
            <person name="Bouck J."/>
            <person name="Brokstein P."/>
            <person name="Brottier P."/>
            <person name="Burtis K.C."/>
            <person name="Busam D.A."/>
            <person name="Butler H."/>
            <person name="Cadieu E."/>
            <person name="Center A."/>
            <person name="Chandra I."/>
            <person name="Cherry J.M."/>
            <person name="Cawley S."/>
            <person name="Dahlke C."/>
            <person name="Davenport L.B."/>
            <person name="Davies P."/>
            <person name="de Pablos B."/>
            <person name="Delcher A."/>
            <person name="Deng Z."/>
            <person name="Mays A.D."/>
            <person name="Dew I."/>
            <person name="Dietz S.M."/>
            <person name="Dodson K."/>
            <person name="Doup L.E."/>
            <person name="Downes M."/>
            <person name="Dugan-Rocha S."/>
            <person name="Dunkov B.C."/>
            <person name="Dunn P."/>
            <person name="Durbin K.J."/>
            <person name="Evangelista C.C."/>
            <person name="Ferraz C."/>
            <person name="Ferriera S."/>
            <person name="Fleischmann W."/>
            <person name="Fosler C."/>
            <person name="Gabrielian A.E."/>
            <person name="Garg N.S."/>
            <person name="Gelbart W.M."/>
            <person name="Glasser K."/>
            <person name="Glodek A."/>
            <person name="Gong F."/>
            <person name="Gorrell J.H."/>
            <person name="Gu Z."/>
            <person name="Guan P."/>
            <person name="Harris M."/>
            <person name="Harris N.L."/>
            <person name="Harvey D.A."/>
            <person name="Heiman T.J."/>
            <person name="Hernandez J.R."/>
            <person name="Houck J."/>
            <person name="Hostin D."/>
            <person name="Houston K.A."/>
            <person name="Howland T.J."/>
            <person name="Wei M.-H."/>
            <person name="Ibegwam C."/>
            <person name="Jalali M."/>
            <person name="Kalush F."/>
            <person name="Karpen G.H."/>
            <person name="Ke Z."/>
            <person name="Kennison J.A."/>
            <person name="Ketchum K.A."/>
            <person name="Kimmel B.E."/>
            <person name="Kodira C.D."/>
            <person name="Kraft C.L."/>
            <person name="Kravitz S."/>
            <person name="Kulp D."/>
            <person name="Lai Z."/>
            <person name="Lasko P."/>
            <person name="Lei Y."/>
            <person name="Levitsky A.A."/>
            <person name="Li J.H."/>
            <person name="Li Z."/>
            <person name="Liang Y."/>
            <person name="Lin X."/>
            <person name="Liu X."/>
            <person name="Mattei B."/>
            <person name="McIntosh T.C."/>
            <person name="McLeod M.P."/>
            <person name="McPherson D."/>
            <person name="Merkulov G."/>
            <person name="Milshina N.V."/>
            <person name="Mobarry C."/>
            <person name="Morris J."/>
            <person name="Moshrefi A."/>
            <person name="Mount S.M."/>
            <person name="Moy M."/>
            <person name="Murphy B."/>
            <person name="Murphy L."/>
            <person name="Muzny D.M."/>
            <person name="Nelson D.L."/>
            <person name="Nelson D.R."/>
            <person name="Nelson K.A."/>
            <person name="Nixon K."/>
            <person name="Nusskern D.R."/>
            <person name="Pacleb J.M."/>
            <person name="Palazzolo M."/>
            <person name="Pittman G.S."/>
            <person name="Pan S."/>
            <person name="Pollard J."/>
            <person name="Puri V."/>
            <person name="Reese M.G."/>
            <person name="Reinert K."/>
            <person name="Remington K."/>
            <person name="Saunders R.D.C."/>
            <person name="Scheeler F."/>
            <person name="Shen H."/>
            <person name="Shue B.C."/>
            <person name="Siden-Kiamos I."/>
            <person name="Simpson M."/>
            <person name="Skupski M.P."/>
            <person name="Smith T.J."/>
            <person name="Spier E."/>
            <person name="Spradling A.C."/>
            <person name="Stapleton M."/>
            <person name="Strong R."/>
            <person name="Sun E."/>
            <person name="Svirskas R."/>
            <person name="Tector C."/>
            <person name="Turner R."/>
            <person name="Venter E."/>
            <person name="Wang A.H."/>
            <person name="Wang X."/>
            <person name="Wang Z.-Y."/>
            <person name="Wassarman D.A."/>
            <person name="Weinstock G.M."/>
            <person name="Weissenbach J."/>
            <person name="Williams S.M."/>
            <person name="Woodage T."/>
            <person name="Worley K.C."/>
            <person name="Wu D."/>
            <person name="Yang S."/>
            <person name="Yao Q.A."/>
            <person name="Ye J."/>
            <person name="Yeh R.-F."/>
            <person name="Zaveri J.S."/>
            <person name="Zhan M."/>
            <person name="Zhang G."/>
            <person name="Zhao Q."/>
            <person name="Zheng L."/>
            <person name="Zheng X.H."/>
            <person name="Zhong F.N."/>
            <person name="Zhong W."/>
            <person name="Zhou X."/>
            <person name="Zhu S.C."/>
            <person name="Zhu X."/>
            <person name="Smith H.O."/>
            <person name="Gibbs R.A."/>
            <person name="Myers E.W."/>
            <person name="Rubin G.M."/>
            <person name="Venter J.C."/>
        </authorList>
    </citation>
    <scope>NUCLEOTIDE SEQUENCE [LARGE SCALE GENOMIC DNA]</scope>
    <source>
        <strain>Berkeley</strain>
    </source>
</reference>
<reference key="4">
    <citation type="journal article" date="2002" name="Genome Biol.">
        <title>Annotation of the Drosophila melanogaster euchromatic genome: a systematic review.</title>
        <authorList>
            <person name="Misra S."/>
            <person name="Crosby M.A."/>
            <person name="Mungall C.J."/>
            <person name="Matthews B.B."/>
            <person name="Campbell K.S."/>
            <person name="Hradecky P."/>
            <person name="Huang Y."/>
            <person name="Kaminker J.S."/>
            <person name="Millburn G.H."/>
            <person name="Prochnik S.E."/>
            <person name="Smith C.D."/>
            <person name="Tupy J.L."/>
            <person name="Whitfield E.J."/>
            <person name="Bayraktaroglu L."/>
            <person name="Berman B.P."/>
            <person name="Bettencourt B.R."/>
            <person name="Celniker S.E."/>
            <person name="de Grey A.D.N.J."/>
            <person name="Drysdale R.A."/>
            <person name="Harris N.L."/>
            <person name="Richter J."/>
            <person name="Russo S."/>
            <person name="Schroeder A.J."/>
            <person name="Shu S.Q."/>
            <person name="Stapleton M."/>
            <person name="Yamada C."/>
            <person name="Ashburner M."/>
            <person name="Gelbart W.M."/>
            <person name="Rubin G.M."/>
            <person name="Lewis S.E."/>
        </authorList>
    </citation>
    <scope>GENOME REANNOTATION</scope>
    <source>
        <strain>Berkeley</strain>
    </source>
</reference>
<reference key="5">
    <citation type="journal article" date="2003" name="Genes Dev.">
        <title>Enhancer-promoter communication mediated by Chip during Pannier-driven proneural patterning is regulated by Osa.</title>
        <authorList>
            <person name="Heitzler P."/>
            <person name="Vanolst L."/>
            <person name="Biryukova I."/>
            <person name="Ramain P."/>
        </authorList>
    </citation>
    <scope>INTERACTION WITH OSA</scope>
</reference>